<evidence type="ECO:0000255" key="1">
    <source>
        <dbReference type="HAMAP-Rule" id="MF_00040"/>
    </source>
</evidence>
<comment type="function">
    <text evidence="1">Responsible for the release of ribosomes from messenger RNA at the termination of protein biosynthesis. May increase the efficiency of translation by recycling ribosomes from one round of translation to another.</text>
</comment>
<comment type="subcellular location">
    <subcellularLocation>
        <location evidence="1">Cytoplasm</location>
    </subcellularLocation>
</comment>
<comment type="similarity">
    <text evidence="1">Belongs to the RRF family.</text>
</comment>
<protein>
    <recommendedName>
        <fullName evidence="1">Ribosome-recycling factor</fullName>
        <shortName evidence="1">RRF</shortName>
    </recommendedName>
    <alternativeName>
        <fullName evidence="1">Ribosome-releasing factor</fullName>
    </alternativeName>
</protein>
<name>RRF_PROM2</name>
<feature type="chain" id="PRO_1000057294" description="Ribosome-recycling factor">
    <location>
        <begin position="1"/>
        <end position="182"/>
    </location>
</feature>
<sequence length="182" mass="20637">MKEKEIQENMNKSIEATQRNFNTIRTGRANASLLDRVSVDYYGAETPIKSLATISTIDSQTISIQPFDISCLQAIEKSISMSDLGITPNNDGKVIRINVPPLTEERRKEFCKLASKYAEEGKVALRNIRRDAVDKEKKDEKDGLISIDESRDNQSEIQKITDKYIALIETKLSEKEKEILKV</sequence>
<keyword id="KW-0963">Cytoplasm</keyword>
<keyword id="KW-0648">Protein biosynthesis</keyword>
<reference key="1">
    <citation type="journal article" date="2007" name="PLoS Genet.">
        <title>Patterns and implications of gene gain and loss in the evolution of Prochlorococcus.</title>
        <authorList>
            <person name="Kettler G.C."/>
            <person name="Martiny A.C."/>
            <person name="Huang K."/>
            <person name="Zucker J."/>
            <person name="Coleman M.L."/>
            <person name="Rodrigue S."/>
            <person name="Chen F."/>
            <person name="Lapidus A."/>
            <person name="Ferriera S."/>
            <person name="Johnson J."/>
            <person name="Steglich C."/>
            <person name="Church G.M."/>
            <person name="Richardson P."/>
            <person name="Chisholm S.W."/>
        </authorList>
    </citation>
    <scope>NUCLEOTIDE SEQUENCE [LARGE SCALE GENOMIC DNA]</scope>
    <source>
        <strain>MIT 9215</strain>
    </source>
</reference>
<organism>
    <name type="scientific">Prochlorococcus marinus (strain MIT 9215)</name>
    <dbReference type="NCBI Taxonomy" id="93060"/>
    <lineage>
        <taxon>Bacteria</taxon>
        <taxon>Bacillati</taxon>
        <taxon>Cyanobacteriota</taxon>
        <taxon>Cyanophyceae</taxon>
        <taxon>Synechococcales</taxon>
        <taxon>Prochlorococcaceae</taxon>
        <taxon>Prochlorococcus</taxon>
    </lineage>
</organism>
<gene>
    <name evidence="1" type="primary">frr</name>
    <name type="ordered locus">P9215_06021</name>
</gene>
<proteinExistence type="inferred from homology"/>
<accession>A8G3N6</accession>
<dbReference type="EMBL" id="CP000825">
    <property type="protein sequence ID" value="ABV50217.1"/>
    <property type="molecule type" value="Genomic_DNA"/>
</dbReference>
<dbReference type="RefSeq" id="WP_012007344.1">
    <property type="nucleotide sequence ID" value="NC_009840.1"/>
</dbReference>
<dbReference type="SMR" id="A8G3N6"/>
<dbReference type="STRING" id="93060.P9215_06021"/>
<dbReference type="KEGG" id="pmh:P9215_06021"/>
<dbReference type="eggNOG" id="COG0233">
    <property type="taxonomic scope" value="Bacteria"/>
</dbReference>
<dbReference type="HOGENOM" id="CLU_073981_2_0_3"/>
<dbReference type="OrthoDB" id="9804006at2"/>
<dbReference type="Proteomes" id="UP000002014">
    <property type="component" value="Chromosome"/>
</dbReference>
<dbReference type="GO" id="GO:0005737">
    <property type="term" value="C:cytoplasm"/>
    <property type="evidence" value="ECO:0007669"/>
    <property type="project" value="UniProtKB-SubCell"/>
</dbReference>
<dbReference type="GO" id="GO:0043023">
    <property type="term" value="F:ribosomal large subunit binding"/>
    <property type="evidence" value="ECO:0007669"/>
    <property type="project" value="TreeGrafter"/>
</dbReference>
<dbReference type="GO" id="GO:0006415">
    <property type="term" value="P:translational termination"/>
    <property type="evidence" value="ECO:0007669"/>
    <property type="project" value="UniProtKB-UniRule"/>
</dbReference>
<dbReference type="CDD" id="cd00520">
    <property type="entry name" value="RRF"/>
    <property type="match status" value="1"/>
</dbReference>
<dbReference type="FunFam" id="1.10.132.20:FF:000001">
    <property type="entry name" value="Ribosome-recycling factor"/>
    <property type="match status" value="1"/>
</dbReference>
<dbReference type="FunFam" id="3.30.1360.40:FF:000001">
    <property type="entry name" value="Ribosome-recycling factor"/>
    <property type="match status" value="1"/>
</dbReference>
<dbReference type="Gene3D" id="3.30.1360.40">
    <property type="match status" value="1"/>
</dbReference>
<dbReference type="Gene3D" id="1.10.132.20">
    <property type="entry name" value="Ribosome-recycling factor"/>
    <property type="match status" value="1"/>
</dbReference>
<dbReference type="HAMAP" id="MF_00040">
    <property type="entry name" value="RRF"/>
    <property type="match status" value="1"/>
</dbReference>
<dbReference type="InterPro" id="IPR002661">
    <property type="entry name" value="Ribosome_recyc_fac"/>
</dbReference>
<dbReference type="InterPro" id="IPR023584">
    <property type="entry name" value="Ribosome_recyc_fac_dom"/>
</dbReference>
<dbReference type="InterPro" id="IPR036191">
    <property type="entry name" value="RRF_sf"/>
</dbReference>
<dbReference type="NCBIfam" id="TIGR00496">
    <property type="entry name" value="frr"/>
    <property type="match status" value="1"/>
</dbReference>
<dbReference type="PANTHER" id="PTHR20982:SF3">
    <property type="entry name" value="MITOCHONDRIAL RIBOSOME RECYCLING FACTOR PSEUDO 1"/>
    <property type="match status" value="1"/>
</dbReference>
<dbReference type="PANTHER" id="PTHR20982">
    <property type="entry name" value="RIBOSOME RECYCLING FACTOR"/>
    <property type="match status" value="1"/>
</dbReference>
<dbReference type="Pfam" id="PF01765">
    <property type="entry name" value="RRF"/>
    <property type="match status" value="1"/>
</dbReference>
<dbReference type="SUPFAM" id="SSF55194">
    <property type="entry name" value="Ribosome recycling factor, RRF"/>
    <property type="match status" value="1"/>
</dbReference>